<organism>
    <name type="scientific">Mus musculus</name>
    <name type="common">Mouse</name>
    <dbReference type="NCBI Taxonomy" id="10090"/>
    <lineage>
        <taxon>Eukaryota</taxon>
        <taxon>Metazoa</taxon>
        <taxon>Chordata</taxon>
        <taxon>Craniata</taxon>
        <taxon>Vertebrata</taxon>
        <taxon>Euteleostomi</taxon>
        <taxon>Mammalia</taxon>
        <taxon>Eutheria</taxon>
        <taxon>Euarchontoglires</taxon>
        <taxon>Glires</taxon>
        <taxon>Rodentia</taxon>
        <taxon>Myomorpha</taxon>
        <taxon>Muroidea</taxon>
        <taxon>Muridae</taxon>
        <taxon>Murinae</taxon>
        <taxon>Mus</taxon>
        <taxon>Mus</taxon>
    </lineage>
</organism>
<reference key="1">
    <citation type="submission" date="1996-09" db="EMBL/GenBank/DDBJ databases">
        <authorList>
            <person name="Rocha D."/>
            <person name="Carrier A."/>
            <person name="Victorero G."/>
            <person name="Mattei M.-G."/>
            <person name="Szatanik M."/>
            <person name="Guenet J.-L."/>
            <person name="Jordan B."/>
        </authorList>
    </citation>
    <scope>NUCLEOTIDE SEQUENCE [MRNA]</scope>
    <source>
        <strain>C57BL/6J</strain>
    </source>
</reference>
<reference key="2">
    <citation type="journal article" date="2005" name="Science">
        <title>The transcriptional landscape of the mammalian genome.</title>
        <authorList>
            <person name="Carninci P."/>
            <person name="Kasukawa T."/>
            <person name="Katayama S."/>
            <person name="Gough J."/>
            <person name="Frith M.C."/>
            <person name="Maeda N."/>
            <person name="Oyama R."/>
            <person name="Ravasi T."/>
            <person name="Lenhard B."/>
            <person name="Wells C."/>
            <person name="Kodzius R."/>
            <person name="Shimokawa K."/>
            <person name="Bajic V.B."/>
            <person name="Brenner S.E."/>
            <person name="Batalov S."/>
            <person name="Forrest A.R."/>
            <person name="Zavolan M."/>
            <person name="Davis M.J."/>
            <person name="Wilming L.G."/>
            <person name="Aidinis V."/>
            <person name="Allen J.E."/>
            <person name="Ambesi-Impiombato A."/>
            <person name="Apweiler R."/>
            <person name="Aturaliya R.N."/>
            <person name="Bailey T.L."/>
            <person name="Bansal M."/>
            <person name="Baxter L."/>
            <person name="Beisel K.W."/>
            <person name="Bersano T."/>
            <person name="Bono H."/>
            <person name="Chalk A.M."/>
            <person name="Chiu K.P."/>
            <person name="Choudhary V."/>
            <person name="Christoffels A."/>
            <person name="Clutterbuck D.R."/>
            <person name="Crowe M.L."/>
            <person name="Dalla E."/>
            <person name="Dalrymple B.P."/>
            <person name="de Bono B."/>
            <person name="Della Gatta G."/>
            <person name="di Bernardo D."/>
            <person name="Down T."/>
            <person name="Engstrom P."/>
            <person name="Fagiolini M."/>
            <person name="Faulkner G."/>
            <person name="Fletcher C.F."/>
            <person name="Fukushima T."/>
            <person name="Furuno M."/>
            <person name="Futaki S."/>
            <person name="Gariboldi M."/>
            <person name="Georgii-Hemming P."/>
            <person name="Gingeras T.R."/>
            <person name="Gojobori T."/>
            <person name="Green R.E."/>
            <person name="Gustincich S."/>
            <person name="Harbers M."/>
            <person name="Hayashi Y."/>
            <person name="Hensch T.K."/>
            <person name="Hirokawa N."/>
            <person name="Hill D."/>
            <person name="Huminiecki L."/>
            <person name="Iacono M."/>
            <person name="Ikeo K."/>
            <person name="Iwama A."/>
            <person name="Ishikawa T."/>
            <person name="Jakt M."/>
            <person name="Kanapin A."/>
            <person name="Katoh M."/>
            <person name="Kawasawa Y."/>
            <person name="Kelso J."/>
            <person name="Kitamura H."/>
            <person name="Kitano H."/>
            <person name="Kollias G."/>
            <person name="Krishnan S.P."/>
            <person name="Kruger A."/>
            <person name="Kummerfeld S.K."/>
            <person name="Kurochkin I.V."/>
            <person name="Lareau L.F."/>
            <person name="Lazarevic D."/>
            <person name="Lipovich L."/>
            <person name="Liu J."/>
            <person name="Liuni S."/>
            <person name="McWilliam S."/>
            <person name="Madan Babu M."/>
            <person name="Madera M."/>
            <person name="Marchionni L."/>
            <person name="Matsuda H."/>
            <person name="Matsuzawa S."/>
            <person name="Miki H."/>
            <person name="Mignone F."/>
            <person name="Miyake S."/>
            <person name="Morris K."/>
            <person name="Mottagui-Tabar S."/>
            <person name="Mulder N."/>
            <person name="Nakano N."/>
            <person name="Nakauchi H."/>
            <person name="Ng P."/>
            <person name="Nilsson R."/>
            <person name="Nishiguchi S."/>
            <person name="Nishikawa S."/>
            <person name="Nori F."/>
            <person name="Ohara O."/>
            <person name="Okazaki Y."/>
            <person name="Orlando V."/>
            <person name="Pang K.C."/>
            <person name="Pavan W.J."/>
            <person name="Pavesi G."/>
            <person name="Pesole G."/>
            <person name="Petrovsky N."/>
            <person name="Piazza S."/>
            <person name="Reed J."/>
            <person name="Reid J.F."/>
            <person name="Ring B.Z."/>
            <person name="Ringwald M."/>
            <person name="Rost B."/>
            <person name="Ruan Y."/>
            <person name="Salzberg S.L."/>
            <person name="Sandelin A."/>
            <person name="Schneider C."/>
            <person name="Schoenbach C."/>
            <person name="Sekiguchi K."/>
            <person name="Semple C.A."/>
            <person name="Seno S."/>
            <person name="Sessa L."/>
            <person name="Sheng Y."/>
            <person name="Shibata Y."/>
            <person name="Shimada H."/>
            <person name="Shimada K."/>
            <person name="Silva D."/>
            <person name="Sinclair B."/>
            <person name="Sperling S."/>
            <person name="Stupka E."/>
            <person name="Sugiura K."/>
            <person name="Sultana R."/>
            <person name="Takenaka Y."/>
            <person name="Taki K."/>
            <person name="Tammoja K."/>
            <person name="Tan S.L."/>
            <person name="Tang S."/>
            <person name="Taylor M.S."/>
            <person name="Tegner J."/>
            <person name="Teichmann S.A."/>
            <person name="Ueda H.R."/>
            <person name="van Nimwegen E."/>
            <person name="Verardo R."/>
            <person name="Wei C.L."/>
            <person name="Yagi K."/>
            <person name="Yamanishi H."/>
            <person name="Zabarovsky E."/>
            <person name="Zhu S."/>
            <person name="Zimmer A."/>
            <person name="Hide W."/>
            <person name="Bult C."/>
            <person name="Grimmond S.M."/>
            <person name="Teasdale R.D."/>
            <person name="Liu E.T."/>
            <person name="Brusic V."/>
            <person name="Quackenbush J."/>
            <person name="Wahlestedt C."/>
            <person name="Mattick J.S."/>
            <person name="Hume D.A."/>
            <person name="Kai C."/>
            <person name="Sasaki D."/>
            <person name="Tomaru Y."/>
            <person name="Fukuda S."/>
            <person name="Kanamori-Katayama M."/>
            <person name="Suzuki M."/>
            <person name="Aoki J."/>
            <person name="Arakawa T."/>
            <person name="Iida J."/>
            <person name="Imamura K."/>
            <person name="Itoh M."/>
            <person name="Kato T."/>
            <person name="Kawaji H."/>
            <person name="Kawagashira N."/>
            <person name="Kawashima T."/>
            <person name="Kojima M."/>
            <person name="Kondo S."/>
            <person name="Konno H."/>
            <person name="Nakano K."/>
            <person name="Ninomiya N."/>
            <person name="Nishio T."/>
            <person name="Okada M."/>
            <person name="Plessy C."/>
            <person name="Shibata K."/>
            <person name="Shiraki T."/>
            <person name="Suzuki S."/>
            <person name="Tagami M."/>
            <person name="Waki K."/>
            <person name="Watahiki A."/>
            <person name="Okamura-Oho Y."/>
            <person name="Suzuki H."/>
            <person name="Kawai J."/>
            <person name="Hayashizaki Y."/>
        </authorList>
    </citation>
    <scope>NUCLEOTIDE SEQUENCE [LARGE SCALE MRNA]</scope>
    <source>
        <strain>C57BL/6J</strain>
        <strain>NOD</strain>
        <tissue>Liver</tissue>
        <tissue>Thymus</tissue>
    </source>
</reference>
<reference key="3">
    <citation type="journal article" date="2004" name="Genome Res.">
        <title>The status, quality, and expansion of the NIH full-length cDNA project: the Mammalian Gene Collection (MGC).</title>
        <authorList>
            <consortium name="The MGC Project Team"/>
        </authorList>
    </citation>
    <scope>NUCLEOTIDE SEQUENCE [LARGE SCALE MRNA]</scope>
    <source>
        <strain>C57BL/6J</strain>
        <tissue>Brain</tissue>
    </source>
</reference>
<reference key="4">
    <citation type="journal article" date="2009" name="Nucleic Acids Res.">
        <title>Molecular characterization of Mybbp1a as a co-repressor on the Period2 promoter.</title>
        <authorList>
            <person name="Hara Y."/>
            <person name="Onishi Y."/>
            <person name="Oishi K."/>
            <person name="Miyazaki K."/>
            <person name="Fukamizu A."/>
            <person name="Ishida N."/>
        </authorList>
    </citation>
    <scope>INTERACTION WITH CRY1</scope>
</reference>
<reference key="5">
    <citation type="journal article" date="2010" name="Cell">
        <title>A tissue-specific atlas of mouse protein phosphorylation and expression.</title>
        <authorList>
            <person name="Huttlin E.L."/>
            <person name="Jedrychowski M.P."/>
            <person name="Elias J.E."/>
            <person name="Goswami T."/>
            <person name="Rad R."/>
            <person name="Beausoleil S.A."/>
            <person name="Villen J."/>
            <person name="Haas W."/>
            <person name="Sowa M.E."/>
            <person name="Gygi S.P."/>
        </authorList>
    </citation>
    <scope>IDENTIFICATION BY MASS SPECTROMETRY [LARGE SCALE ANALYSIS]</scope>
    <source>
        <tissue>Brain</tissue>
        <tissue>Brown adipose tissue</tissue>
        <tissue>Heart</tissue>
        <tissue>Kidney</tissue>
        <tissue>Liver</tissue>
        <tissue>Lung</tissue>
        <tissue>Pancreas</tissue>
        <tissue>Spleen</tissue>
        <tissue>Testis</tissue>
    </source>
</reference>
<reference evidence="6 7" key="6">
    <citation type="journal article" date="2022" name="Nature">
        <title>A male germ-cell-specific ribosome controls male fertility.</title>
        <authorList>
            <person name="Li H."/>
            <person name="Huo Y."/>
            <person name="He X."/>
            <person name="Yao L."/>
            <person name="Zhang H."/>
            <person name="Cui Y."/>
            <person name="Xiao H."/>
            <person name="Xie W."/>
            <person name="Zhang D."/>
            <person name="Wang Y."/>
            <person name="Zhang S."/>
            <person name="Tu H."/>
            <person name="Cheng Y."/>
            <person name="Guo Y."/>
            <person name="Cao X."/>
            <person name="Zhu Y."/>
            <person name="Jiang T."/>
            <person name="Guo X."/>
            <person name="Qin Y."/>
            <person name="Sha J."/>
        </authorList>
    </citation>
    <scope>STRUCTURE BY ELECTRON MICROSCOPY (3.03 ANGSTROMS) OF RIBOSOME</scope>
    <scope>FUNCTION</scope>
    <scope>SUBUNIT</scope>
    <scope>SUBCELLULAR LOCATION</scope>
</reference>
<sequence length="257" mass="28025">MGRVIRGQRKGAGSVFRAHVKHRKGAARLRAVDFAERHGYIKGIVKDIIHDPGRGAPLAKVVFRDPYRFKKRTELFIAAEGIHTGQFVYCGKKAQLNIGNVLPVGTMPEGTIVCCLEEKPGDRGKLARASGNYATVISHNPETKKTRVKLPSGSKKVISSANRAVVGVVAGGGRIDKPILKAGRAYHKYKAKRNCWPRVRGVAMNPVEHPFGGGNHQHIGKPSTIRRDAPAGRKVGLIAARRTGRLRGTKTVQEKEN</sequence>
<comment type="function">
    <text evidence="4">Component of the large ribosomal subunit (PubMed:36517592). The ribosome is a large ribonucleoprotein complex responsible for the synthesis of proteins in the cell (PubMed:36517592).</text>
</comment>
<comment type="subunit">
    <text evidence="3 4">Component of the large ribosomal subunit (PubMed:36517592). Interacts with CRY1 (PubMed:19129230).</text>
</comment>
<comment type="subcellular location">
    <subcellularLocation>
        <location evidence="4">Cytoplasm</location>
    </subcellularLocation>
</comment>
<comment type="PTM">
    <text evidence="1">Hydroxylated on His-216 by RIOX1. The modification is impaired by hypoxia.</text>
</comment>
<comment type="similarity">
    <text evidence="5">Belongs to the universal ribosomal protein uL2 family.</text>
</comment>
<accession>P62918</accession>
<accession>P25120</accession>
<accession>Q3V288</accession>
<protein>
    <recommendedName>
        <fullName evidence="5">Large ribosomal subunit protein uL2</fullName>
    </recommendedName>
    <alternativeName>
        <fullName>60S ribosomal protein L8</fullName>
    </alternativeName>
</protein>
<dbReference type="EMBL" id="U67771">
    <property type="protein sequence ID" value="AAC35587.1"/>
    <property type="molecule type" value="mRNA"/>
</dbReference>
<dbReference type="EMBL" id="AK088263">
    <property type="protein sequence ID" value="BAC40244.1"/>
    <property type="molecule type" value="mRNA"/>
</dbReference>
<dbReference type="EMBL" id="AK131970">
    <property type="protein sequence ID" value="BAE20910.1"/>
    <property type="molecule type" value="mRNA"/>
</dbReference>
<dbReference type="EMBL" id="AK145498">
    <property type="protein sequence ID" value="BAE26472.1"/>
    <property type="molecule type" value="mRNA"/>
</dbReference>
<dbReference type="EMBL" id="AK167775">
    <property type="protein sequence ID" value="BAE39807.1"/>
    <property type="molecule type" value="mRNA"/>
</dbReference>
<dbReference type="EMBL" id="AK168769">
    <property type="protein sequence ID" value="BAE40605.1"/>
    <property type="molecule type" value="mRNA"/>
</dbReference>
<dbReference type="EMBL" id="BC043017">
    <property type="protein sequence ID" value="AAH43017.1"/>
    <property type="molecule type" value="mRNA"/>
</dbReference>
<dbReference type="CCDS" id="CCDS27595.1"/>
<dbReference type="RefSeq" id="NP_036183.1">
    <property type="nucleotide sequence ID" value="NM_012053.2"/>
</dbReference>
<dbReference type="PDB" id="6SWA">
    <property type="method" value="EM"/>
    <property type="resolution" value="3.10 A"/>
    <property type="chains" value="A=1-257"/>
</dbReference>
<dbReference type="PDB" id="7CPU">
    <property type="method" value="EM"/>
    <property type="resolution" value="2.82 A"/>
    <property type="chains" value="LA=1-257"/>
</dbReference>
<dbReference type="PDB" id="7CPV">
    <property type="method" value="EM"/>
    <property type="resolution" value="3.03 A"/>
    <property type="chains" value="LA=1-257"/>
</dbReference>
<dbReference type="PDB" id="7LS1">
    <property type="method" value="EM"/>
    <property type="resolution" value="3.30 A"/>
    <property type="chains" value="D2=1-257"/>
</dbReference>
<dbReference type="PDB" id="7LS2">
    <property type="method" value="EM"/>
    <property type="resolution" value="3.10 A"/>
    <property type="chains" value="D2=1-257"/>
</dbReference>
<dbReference type="PDBsum" id="6SWA"/>
<dbReference type="PDBsum" id="7CPU"/>
<dbReference type="PDBsum" id="7CPV"/>
<dbReference type="PDBsum" id="7LS1"/>
<dbReference type="PDBsum" id="7LS2"/>
<dbReference type="EMDB" id="EMD-10321"/>
<dbReference type="EMDB" id="EMD-23500"/>
<dbReference type="EMDB" id="EMD-23501"/>
<dbReference type="EMDB" id="EMD-30432"/>
<dbReference type="EMDB" id="EMD-30433"/>
<dbReference type="SMR" id="P62918"/>
<dbReference type="BioGRID" id="205087">
    <property type="interactions" value="98"/>
</dbReference>
<dbReference type="ComplexPortal" id="CPX-5262">
    <property type="entry name" value="60S cytosolic large ribosomal subunit"/>
</dbReference>
<dbReference type="ComplexPortal" id="CPX-7662">
    <property type="entry name" value="60S cytosolic large ribosomal subunit, testis-specific variant"/>
</dbReference>
<dbReference type="ComplexPortal" id="CPX-7663">
    <property type="entry name" value="60S cytosolic large ribosomal subunit, striated muscle variant"/>
</dbReference>
<dbReference type="CORUM" id="P62918"/>
<dbReference type="FunCoup" id="P62918">
    <property type="interactions" value="2095"/>
</dbReference>
<dbReference type="IntAct" id="P62918">
    <property type="interactions" value="8"/>
</dbReference>
<dbReference type="MINT" id="P62918"/>
<dbReference type="STRING" id="10090.ENSMUSP00000155657"/>
<dbReference type="GlyGen" id="P62918">
    <property type="glycosylation" value="1 site, 1 O-linked glycan (1 site)"/>
</dbReference>
<dbReference type="iPTMnet" id="P62918"/>
<dbReference type="MetOSite" id="P62918"/>
<dbReference type="PhosphoSitePlus" id="P62918"/>
<dbReference type="SwissPalm" id="P62918"/>
<dbReference type="jPOST" id="P62918"/>
<dbReference type="PaxDb" id="10090-ENSMUSP00000004072"/>
<dbReference type="PeptideAtlas" id="P62918"/>
<dbReference type="ProteomicsDB" id="299825"/>
<dbReference type="Pumba" id="P62918"/>
<dbReference type="TopDownProteomics" id="P62918"/>
<dbReference type="Antibodypedia" id="14991">
    <property type="antibodies" value="296 antibodies from 32 providers"/>
</dbReference>
<dbReference type="DNASU" id="26961"/>
<dbReference type="Ensembl" id="ENSMUST00000004072.10">
    <property type="protein sequence ID" value="ENSMUSP00000004072.9"/>
    <property type="gene ID" value="ENSMUSG00000003970.10"/>
</dbReference>
<dbReference type="Ensembl" id="ENSMUST00000229183.2">
    <property type="protein sequence ID" value="ENSMUSP00000155657.2"/>
    <property type="gene ID" value="ENSMUSG00000003970.10"/>
</dbReference>
<dbReference type="GeneID" id="26961"/>
<dbReference type="KEGG" id="mmu:26961"/>
<dbReference type="UCSC" id="uc007wmt.2">
    <property type="organism name" value="mouse"/>
</dbReference>
<dbReference type="AGR" id="MGI:1350927"/>
<dbReference type="CTD" id="6132"/>
<dbReference type="MGI" id="MGI:1350927">
    <property type="gene designation" value="Rpl8"/>
</dbReference>
<dbReference type="VEuPathDB" id="HostDB:ENSMUSG00000003970"/>
<dbReference type="eggNOG" id="KOG2309">
    <property type="taxonomic scope" value="Eukaryota"/>
</dbReference>
<dbReference type="GeneTree" id="ENSGT00940000153244"/>
<dbReference type="HOGENOM" id="CLU_036235_0_3_1"/>
<dbReference type="InParanoid" id="P62918"/>
<dbReference type="OMA" id="GGRHPCT"/>
<dbReference type="OrthoDB" id="10267824at2759"/>
<dbReference type="PhylomeDB" id="P62918"/>
<dbReference type="TreeFam" id="TF300748"/>
<dbReference type="Reactome" id="R-MMU-156827">
    <property type="pathway name" value="L13a-mediated translational silencing of Ceruloplasmin expression"/>
</dbReference>
<dbReference type="Reactome" id="R-MMU-1799339">
    <property type="pathway name" value="SRP-dependent cotranslational protein targeting to membrane"/>
</dbReference>
<dbReference type="Reactome" id="R-MMU-6791226">
    <property type="pathway name" value="Major pathway of rRNA processing in the nucleolus and cytosol"/>
</dbReference>
<dbReference type="Reactome" id="R-MMU-72689">
    <property type="pathway name" value="Formation of a pool of free 40S subunits"/>
</dbReference>
<dbReference type="Reactome" id="R-MMU-72706">
    <property type="pathway name" value="GTP hydrolysis and joining of the 60S ribosomal subunit"/>
</dbReference>
<dbReference type="Reactome" id="R-MMU-9629569">
    <property type="pathway name" value="Protein hydroxylation"/>
</dbReference>
<dbReference type="Reactome" id="R-MMU-975956">
    <property type="pathway name" value="Nonsense Mediated Decay (NMD) independent of the Exon Junction Complex (EJC)"/>
</dbReference>
<dbReference type="Reactome" id="R-MMU-975957">
    <property type="pathway name" value="Nonsense Mediated Decay (NMD) enhanced by the Exon Junction Complex (EJC)"/>
</dbReference>
<dbReference type="BioGRID-ORCS" id="26961">
    <property type="hits" value="28 hits in 65 CRISPR screens"/>
</dbReference>
<dbReference type="CD-CODE" id="5E82D60E">
    <property type="entry name" value="Nucleolus"/>
</dbReference>
<dbReference type="CD-CODE" id="CE726F99">
    <property type="entry name" value="Postsynaptic density"/>
</dbReference>
<dbReference type="ChiTaRS" id="Rpl8">
    <property type="organism name" value="mouse"/>
</dbReference>
<dbReference type="PRO" id="PR:P62918"/>
<dbReference type="Proteomes" id="UP000000589">
    <property type="component" value="Chromosome 15"/>
</dbReference>
<dbReference type="RNAct" id="P62918">
    <property type="molecule type" value="protein"/>
</dbReference>
<dbReference type="Bgee" id="ENSMUSG00000003970">
    <property type="expression patterns" value="Expressed in pharyngeal arch 1 and 271 other cell types or tissues"/>
</dbReference>
<dbReference type="GO" id="GO:0005737">
    <property type="term" value="C:cytoplasm"/>
    <property type="evidence" value="ECO:0000314"/>
    <property type="project" value="ComplexPortal"/>
</dbReference>
<dbReference type="GO" id="GO:0005829">
    <property type="term" value="C:cytosol"/>
    <property type="evidence" value="ECO:0000304"/>
    <property type="project" value="Reactome"/>
</dbReference>
<dbReference type="GO" id="GO:0022625">
    <property type="term" value="C:cytosolic large ribosomal subunit"/>
    <property type="evidence" value="ECO:0000314"/>
    <property type="project" value="UniProtKB"/>
</dbReference>
<dbReference type="GO" id="GO:0098794">
    <property type="term" value="C:postsynapse"/>
    <property type="evidence" value="ECO:0000303"/>
    <property type="project" value="SynGO"/>
</dbReference>
<dbReference type="GO" id="GO:0014069">
    <property type="term" value="C:postsynaptic density"/>
    <property type="evidence" value="ECO:0007669"/>
    <property type="project" value="Ensembl"/>
</dbReference>
<dbReference type="GO" id="GO:0098793">
    <property type="term" value="C:presynapse"/>
    <property type="evidence" value="ECO:0000303"/>
    <property type="project" value="SynGO"/>
</dbReference>
<dbReference type="GO" id="GO:0005840">
    <property type="term" value="C:ribosome"/>
    <property type="evidence" value="ECO:0000303"/>
    <property type="project" value="SynGO"/>
</dbReference>
<dbReference type="GO" id="GO:0045202">
    <property type="term" value="C:synapse"/>
    <property type="evidence" value="ECO:0000314"/>
    <property type="project" value="SynGO"/>
</dbReference>
<dbReference type="GO" id="GO:0019843">
    <property type="term" value="F:rRNA binding"/>
    <property type="evidence" value="ECO:0007669"/>
    <property type="project" value="UniProtKB-KW"/>
</dbReference>
<dbReference type="GO" id="GO:0003735">
    <property type="term" value="F:structural constituent of ribosome"/>
    <property type="evidence" value="ECO:0000314"/>
    <property type="project" value="UniProtKB"/>
</dbReference>
<dbReference type="GO" id="GO:0002181">
    <property type="term" value="P:cytoplasmic translation"/>
    <property type="evidence" value="ECO:0000303"/>
    <property type="project" value="ComplexPortal"/>
</dbReference>
<dbReference type="GO" id="GO:0140242">
    <property type="term" value="P:translation at postsynapse"/>
    <property type="evidence" value="ECO:0000303"/>
    <property type="project" value="SynGO"/>
</dbReference>
<dbReference type="GO" id="GO:0140236">
    <property type="term" value="P:translation at presynapse"/>
    <property type="evidence" value="ECO:0000303"/>
    <property type="project" value="SynGO"/>
</dbReference>
<dbReference type="FunFam" id="4.10.950.10:FF:000002">
    <property type="entry name" value="60S ribosomal protein L2"/>
    <property type="match status" value="1"/>
</dbReference>
<dbReference type="FunFam" id="2.30.30.30:FF:000006">
    <property type="entry name" value="60S ribosomal protein L8"/>
    <property type="match status" value="1"/>
</dbReference>
<dbReference type="FunFam" id="2.40.50.140:FF:000581">
    <property type="entry name" value="Ribosomal protein L8"/>
    <property type="match status" value="1"/>
</dbReference>
<dbReference type="Gene3D" id="2.30.30.30">
    <property type="match status" value="1"/>
</dbReference>
<dbReference type="Gene3D" id="2.40.50.140">
    <property type="entry name" value="Nucleic acid-binding proteins"/>
    <property type="match status" value="1"/>
</dbReference>
<dbReference type="Gene3D" id="4.10.950.10">
    <property type="entry name" value="Ribosomal protein L2, domain 3"/>
    <property type="match status" value="1"/>
</dbReference>
<dbReference type="HAMAP" id="MF_01320_A">
    <property type="entry name" value="Ribosomal_uL2_A"/>
    <property type="match status" value="1"/>
</dbReference>
<dbReference type="InterPro" id="IPR012340">
    <property type="entry name" value="NA-bd_OB-fold"/>
</dbReference>
<dbReference type="InterPro" id="IPR014722">
    <property type="entry name" value="Rib_uL2_dom2"/>
</dbReference>
<dbReference type="InterPro" id="IPR002171">
    <property type="entry name" value="Ribosomal_uL2"/>
</dbReference>
<dbReference type="InterPro" id="IPR023672">
    <property type="entry name" value="Ribosomal_uL2_arc_euk"/>
</dbReference>
<dbReference type="InterPro" id="IPR022669">
    <property type="entry name" value="Ribosomal_uL2_C"/>
</dbReference>
<dbReference type="InterPro" id="IPR022671">
    <property type="entry name" value="Ribosomal_uL2_CS"/>
</dbReference>
<dbReference type="InterPro" id="IPR014726">
    <property type="entry name" value="Ribosomal_uL2_dom3"/>
</dbReference>
<dbReference type="InterPro" id="IPR022666">
    <property type="entry name" value="Ribosomal_uL2_RNA-bd_dom"/>
</dbReference>
<dbReference type="InterPro" id="IPR008991">
    <property type="entry name" value="Translation_prot_SH3-like_sf"/>
</dbReference>
<dbReference type="NCBIfam" id="NF007180">
    <property type="entry name" value="PRK09612.1"/>
    <property type="match status" value="1"/>
</dbReference>
<dbReference type="PANTHER" id="PTHR13691:SF16">
    <property type="entry name" value="LARGE RIBOSOMAL SUBUNIT PROTEIN UL2"/>
    <property type="match status" value="1"/>
</dbReference>
<dbReference type="PANTHER" id="PTHR13691">
    <property type="entry name" value="RIBOSOMAL PROTEIN L2"/>
    <property type="match status" value="1"/>
</dbReference>
<dbReference type="Pfam" id="PF00181">
    <property type="entry name" value="Ribosomal_L2"/>
    <property type="match status" value="1"/>
</dbReference>
<dbReference type="Pfam" id="PF03947">
    <property type="entry name" value="Ribosomal_L2_C"/>
    <property type="match status" value="1"/>
</dbReference>
<dbReference type="PIRSF" id="PIRSF002158">
    <property type="entry name" value="Ribosomal_L2"/>
    <property type="match status" value="1"/>
</dbReference>
<dbReference type="SMART" id="SM01383">
    <property type="entry name" value="Ribosomal_L2"/>
    <property type="match status" value="1"/>
</dbReference>
<dbReference type="SMART" id="SM01382">
    <property type="entry name" value="Ribosomal_L2_C"/>
    <property type="match status" value="1"/>
</dbReference>
<dbReference type="SUPFAM" id="SSF50249">
    <property type="entry name" value="Nucleic acid-binding proteins"/>
    <property type="match status" value="1"/>
</dbReference>
<dbReference type="SUPFAM" id="SSF50104">
    <property type="entry name" value="Translation proteins SH3-like domain"/>
    <property type="match status" value="1"/>
</dbReference>
<dbReference type="PROSITE" id="PS00467">
    <property type="entry name" value="RIBOSOMAL_L2"/>
    <property type="match status" value="1"/>
</dbReference>
<evidence type="ECO:0000250" key="1">
    <source>
        <dbReference type="UniProtKB" id="P62917"/>
    </source>
</evidence>
<evidence type="ECO:0000256" key="2">
    <source>
        <dbReference type="SAM" id="MobiDB-lite"/>
    </source>
</evidence>
<evidence type="ECO:0000269" key="3">
    <source>
    </source>
</evidence>
<evidence type="ECO:0000269" key="4">
    <source>
    </source>
</evidence>
<evidence type="ECO:0000305" key="5"/>
<evidence type="ECO:0007744" key="6">
    <source>
        <dbReference type="PDB" id="7CPU"/>
    </source>
</evidence>
<evidence type="ECO:0007744" key="7">
    <source>
        <dbReference type="PDB" id="7CPV"/>
    </source>
</evidence>
<feature type="chain" id="PRO_0000129744" description="Large ribosomal subunit protein uL2">
    <location>
        <begin position="1"/>
        <end position="257"/>
    </location>
</feature>
<feature type="region of interest" description="Disordered" evidence="2">
    <location>
        <begin position="207"/>
        <end position="232"/>
    </location>
</feature>
<feature type="modified residue" description="(3S)-3-hydroxyhistidine" evidence="1">
    <location>
        <position position="216"/>
    </location>
</feature>
<feature type="cross-link" description="Glycyl lysine isopeptide (Lys-Gly) (interchain with G-Cter in SUMO2)" evidence="1">
    <location>
        <position position="42"/>
    </location>
</feature>
<feature type="cross-link" description="Glycyl lysine isopeptide (Lys-Gly) (interchain with G-Cter in SUMO2)" evidence="1">
    <location>
        <position position="149"/>
    </location>
</feature>
<feature type="cross-link" description="Glycyl lysine isopeptide (Lys-Gly) (interchain with G-Cter in SUMO2)" evidence="1">
    <location>
        <position position="234"/>
    </location>
</feature>
<feature type="cross-link" description="Glycyl lysine isopeptide (Lys-Gly) (interchain with G-Cter in SUMO2)" evidence="1">
    <location>
        <position position="250"/>
    </location>
</feature>
<proteinExistence type="evidence at protein level"/>
<gene>
    <name type="primary">Rpl8</name>
</gene>
<name>RL8_MOUSE</name>
<keyword id="KW-0002">3D-structure</keyword>
<keyword id="KW-0963">Cytoplasm</keyword>
<keyword id="KW-0379">Hydroxylation</keyword>
<keyword id="KW-1017">Isopeptide bond</keyword>
<keyword id="KW-1185">Reference proteome</keyword>
<keyword id="KW-0687">Ribonucleoprotein</keyword>
<keyword id="KW-0689">Ribosomal protein</keyword>
<keyword id="KW-0694">RNA-binding</keyword>
<keyword id="KW-0699">rRNA-binding</keyword>
<keyword id="KW-0832">Ubl conjugation</keyword>